<dbReference type="EC" id="2.7.11.33" evidence="1"/>
<dbReference type="EC" id="2.7.4.28" evidence="1"/>
<dbReference type="EMBL" id="CP000094">
    <property type="protein sequence ID" value="ABA73512.1"/>
    <property type="molecule type" value="Genomic_DNA"/>
</dbReference>
<dbReference type="RefSeq" id="WP_011333245.1">
    <property type="nucleotide sequence ID" value="NC_007492.2"/>
</dbReference>
<dbReference type="SMR" id="Q3KFE4"/>
<dbReference type="KEGG" id="pfo:Pfl01_1769"/>
<dbReference type="eggNOG" id="COG1806">
    <property type="taxonomic scope" value="Bacteria"/>
</dbReference>
<dbReference type="HOGENOM" id="CLU_046206_1_0_6"/>
<dbReference type="Proteomes" id="UP000002704">
    <property type="component" value="Chromosome"/>
</dbReference>
<dbReference type="GO" id="GO:0043531">
    <property type="term" value="F:ADP binding"/>
    <property type="evidence" value="ECO:0007669"/>
    <property type="project" value="UniProtKB-UniRule"/>
</dbReference>
<dbReference type="GO" id="GO:0005524">
    <property type="term" value="F:ATP binding"/>
    <property type="evidence" value="ECO:0007669"/>
    <property type="project" value="InterPro"/>
</dbReference>
<dbReference type="GO" id="GO:0016776">
    <property type="term" value="F:phosphotransferase activity, phosphate group as acceptor"/>
    <property type="evidence" value="ECO:0007669"/>
    <property type="project" value="UniProtKB-UniRule"/>
</dbReference>
<dbReference type="GO" id="GO:0004674">
    <property type="term" value="F:protein serine/threonine kinase activity"/>
    <property type="evidence" value="ECO:0007669"/>
    <property type="project" value="UniProtKB-UniRule"/>
</dbReference>
<dbReference type="HAMAP" id="MF_01062">
    <property type="entry name" value="PSRP"/>
    <property type="match status" value="1"/>
</dbReference>
<dbReference type="InterPro" id="IPR005177">
    <property type="entry name" value="Kinase-pyrophosphorylase"/>
</dbReference>
<dbReference type="InterPro" id="IPR026530">
    <property type="entry name" value="PSRP"/>
</dbReference>
<dbReference type="NCBIfam" id="NF003742">
    <property type="entry name" value="PRK05339.1"/>
    <property type="match status" value="1"/>
</dbReference>
<dbReference type="PANTHER" id="PTHR31756">
    <property type="entry name" value="PYRUVATE, PHOSPHATE DIKINASE REGULATORY PROTEIN 1, CHLOROPLASTIC"/>
    <property type="match status" value="1"/>
</dbReference>
<dbReference type="PANTHER" id="PTHR31756:SF3">
    <property type="entry name" value="PYRUVATE, PHOSPHATE DIKINASE REGULATORY PROTEIN 1, CHLOROPLASTIC"/>
    <property type="match status" value="1"/>
</dbReference>
<dbReference type="Pfam" id="PF03618">
    <property type="entry name" value="Kinase-PPPase"/>
    <property type="match status" value="1"/>
</dbReference>
<proteinExistence type="inferred from homology"/>
<sequence>MKRSAFFISDGTGITAETLGQSLLAQFENITFSKFTRPYIDSVEKARAMVQQINKAAETDGFRPIIFDTIVNQDIREILATSNGFMIDIFSTFLAPLEQELTEHSSYTVGKSHSIGHNSNYMERIEAVNFALDNDDGARTHYYDKADLILVGVSRCGKTPTCLYMAMQFGIRAANYPLTEDDMERLQLPAALRAHQHKLFGLTIDPDRLTAIRNERKPNSRYSSYAQCEFEVREVENLFRRENIPHINSTHFSVEEISAKILVEKGVERRFK</sequence>
<gene>
    <name type="ordered locus">Pfl01_1769</name>
</gene>
<organism>
    <name type="scientific">Pseudomonas fluorescens (strain Pf0-1)</name>
    <dbReference type="NCBI Taxonomy" id="205922"/>
    <lineage>
        <taxon>Bacteria</taxon>
        <taxon>Pseudomonadati</taxon>
        <taxon>Pseudomonadota</taxon>
        <taxon>Gammaproteobacteria</taxon>
        <taxon>Pseudomonadales</taxon>
        <taxon>Pseudomonadaceae</taxon>
        <taxon>Pseudomonas</taxon>
    </lineage>
</organism>
<feature type="chain" id="PRO_0000316717" description="Putative phosphoenolpyruvate synthase regulatory protein">
    <location>
        <begin position="1"/>
        <end position="272"/>
    </location>
</feature>
<feature type="binding site" evidence="1">
    <location>
        <begin position="152"/>
        <end position="159"/>
    </location>
    <ligand>
        <name>ADP</name>
        <dbReference type="ChEBI" id="CHEBI:456216"/>
    </ligand>
</feature>
<protein>
    <recommendedName>
        <fullName evidence="1">Putative phosphoenolpyruvate synthase regulatory protein</fullName>
        <shortName evidence="1">PEP synthase regulatory protein</shortName>
        <shortName evidence="1">PSRP</shortName>
        <ecNumber evidence="1">2.7.11.33</ecNumber>
        <ecNumber evidence="1">2.7.4.28</ecNumber>
    </recommendedName>
    <alternativeName>
        <fullName evidence="1">Pyruvate, water dikinase regulatory protein</fullName>
    </alternativeName>
</protein>
<evidence type="ECO:0000255" key="1">
    <source>
        <dbReference type="HAMAP-Rule" id="MF_01062"/>
    </source>
</evidence>
<accession>Q3KFE4</accession>
<reference key="1">
    <citation type="journal article" date="2009" name="Genome Biol.">
        <title>Genomic and genetic analyses of diversity and plant interactions of Pseudomonas fluorescens.</title>
        <authorList>
            <person name="Silby M.W."/>
            <person name="Cerdeno-Tarraga A.M."/>
            <person name="Vernikos G.S."/>
            <person name="Giddens S.R."/>
            <person name="Jackson R.W."/>
            <person name="Preston G.M."/>
            <person name="Zhang X.-X."/>
            <person name="Moon C.D."/>
            <person name="Gehrig S.M."/>
            <person name="Godfrey S.A.C."/>
            <person name="Knight C.G."/>
            <person name="Malone J.G."/>
            <person name="Robinson Z."/>
            <person name="Spiers A.J."/>
            <person name="Harris S."/>
            <person name="Challis G.L."/>
            <person name="Yaxley A.M."/>
            <person name="Harris D."/>
            <person name="Seeger K."/>
            <person name="Murphy L."/>
            <person name="Rutter S."/>
            <person name="Squares R."/>
            <person name="Quail M.A."/>
            <person name="Saunders E."/>
            <person name="Mavromatis K."/>
            <person name="Brettin T.S."/>
            <person name="Bentley S.D."/>
            <person name="Hothersall J."/>
            <person name="Stephens E."/>
            <person name="Thomas C.M."/>
            <person name="Parkhill J."/>
            <person name="Levy S.B."/>
            <person name="Rainey P.B."/>
            <person name="Thomson N.R."/>
        </authorList>
    </citation>
    <scope>NUCLEOTIDE SEQUENCE [LARGE SCALE GENOMIC DNA]</scope>
    <source>
        <strain>Pf0-1</strain>
    </source>
</reference>
<name>PSRP_PSEPF</name>
<keyword id="KW-0418">Kinase</keyword>
<keyword id="KW-0547">Nucleotide-binding</keyword>
<keyword id="KW-0723">Serine/threonine-protein kinase</keyword>
<keyword id="KW-0808">Transferase</keyword>
<comment type="function">
    <text evidence="1">Bifunctional serine/threonine kinase and phosphorylase involved in the regulation of the phosphoenolpyruvate synthase (PEPS) by catalyzing its phosphorylation/dephosphorylation.</text>
</comment>
<comment type="catalytic activity">
    <reaction evidence="1">
        <text>[pyruvate, water dikinase] + ADP = [pyruvate, water dikinase]-phosphate + AMP + H(+)</text>
        <dbReference type="Rhea" id="RHEA:46020"/>
        <dbReference type="Rhea" id="RHEA-COMP:11425"/>
        <dbReference type="Rhea" id="RHEA-COMP:11426"/>
        <dbReference type="ChEBI" id="CHEBI:15378"/>
        <dbReference type="ChEBI" id="CHEBI:43176"/>
        <dbReference type="ChEBI" id="CHEBI:68546"/>
        <dbReference type="ChEBI" id="CHEBI:456215"/>
        <dbReference type="ChEBI" id="CHEBI:456216"/>
        <dbReference type="EC" id="2.7.11.33"/>
    </reaction>
</comment>
<comment type="catalytic activity">
    <reaction evidence="1">
        <text>[pyruvate, water dikinase]-phosphate + phosphate + H(+) = [pyruvate, water dikinase] + diphosphate</text>
        <dbReference type="Rhea" id="RHEA:48580"/>
        <dbReference type="Rhea" id="RHEA-COMP:11425"/>
        <dbReference type="Rhea" id="RHEA-COMP:11426"/>
        <dbReference type="ChEBI" id="CHEBI:15378"/>
        <dbReference type="ChEBI" id="CHEBI:33019"/>
        <dbReference type="ChEBI" id="CHEBI:43176"/>
        <dbReference type="ChEBI" id="CHEBI:43474"/>
        <dbReference type="ChEBI" id="CHEBI:68546"/>
        <dbReference type="EC" id="2.7.4.28"/>
    </reaction>
</comment>
<comment type="similarity">
    <text evidence="1">Belongs to the pyruvate, phosphate/water dikinase regulatory protein family. PSRP subfamily.</text>
</comment>